<comment type="function">
    <text evidence="1">E1 component of the 2-oxoglutarate dehydrogenase (OGDH) complex which catalyzes the decarboxylation of 2-oxoglutarate, the first step in the conversion of 2-oxoglutarate to succinyl-CoA and CO(2).</text>
</comment>
<comment type="catalytic activity">
    <reaction evidence="1">
        <text>N(6)-[(R)-lipoyl]-L-lysyl-[protein] + 2-oxoglutarate + H(+) = N(6)-[(R)-S(8)-succinyldihydrolipoyl]-L-lysyl-[protein] + CO2</text>
        <dbReference type="Rhea" id="RHEA:12188"/>
        <dbReference type="Rhea" id="RHEA-COMP:10474"/>
        <dbReference type="Rhea" id="RHEA-COMP:20092"/>
        <dbReference type="ChEBI" id="CHEBI:15378"/>
        <dbReference type="ChEBI" id="CHEBI:16526"/>
        <dbReference type="ChEBI" id="CHEBI:16810"/>
        <dbReference type="ChEBI" id="CHEBI:83099"/>
        <dbReference type="ChEBI" id="CHEBI:83120"/>
        <dbReference type="EC" id="1.2.4.2"/>
    </reaction>
</comment>
<comment type="cofactor">
    <cofactor evidence="1">
        <name>thiamine diphosphate</name>
        <dbReference type="ChEBI" id="CHEBI:58937"/>
    </cofactor>
</comment>
<comment type="subunit">
    <text evidence="1">Homodimer. Part of the 2-oxoglutarate dehydrogenase (OGDH) complex composed of E1 (2-oxoglutarate dehydrogenase), E2 (dihydrolipoamide succinyltransferase) and E3 (dihydrolipoamide dehydrogenase); the complex contains multiple copies of the three enzymatic components (E1, E2 and E3).</text>
</comment>
<comment type="similarity">
    <text evidence="1">Belongs to the alpha-ketoglutarate dehydrogenase family.</text>
</comment>
<proteinExistence type="inferred from homology"/>
<name>ODO1_STAA8</name>
<protein>
    <recommendedName>
        <fullName evidence="1">2-oxoglutarate dehydrogenase E1 component</fullName>
        <ecNumber evidence="1">1.2.4.2</ecNumber>
    </recommendedName>
    <alternativeName>
        <fullName evidence="1">Alpha-ketoglutarate dehydrogenase</fullName>
    </alternativeName>
</protein>
<feature type="chain" id="PRO_1000065703" description="2-oxoglutarate dehydrogenase E1 component">
    <location>
        <begin position="1"/>
        <end position="932"/>
    </location>
</feature>
<dbReference type="EC" id="1.2.4.2" evidence="1"/>
<dbReference type="EMBL" id="CP000253">
    <property type="protein sequence ID" value="ABD30511.1"/>
    <property type="molecule type" value="Genomic_DNA"/>
</dbReference>
<dbReference type="RefSeq" id="WP_000180666.1">
    <property type="nucleotide sequence ID" value="NZ_LS483365.1"/>
</dbReference>
<dbReference type="SMR" id="Q2FYM1"/>
<dbReference type="STRING" id="93061.SAOUHSC_01418"/>
<dbReference type="PaxDb" id="1280-SAXN108_1432"/>
<dbReference type="KEGG" id="sao:SAOUHSC_01418"/>
<dbReference type="PATRIC" id="fig|93061.5.peg.1297"/>
<dbReference type="eggNOG" id="COG0567">
    <property type="taxonomic scope" value="Bacteria"/>
</dbReference>
<dbReference type="HOGENOM" id="CLU_004709_1_0_9"/>
<dbReference type="OrthoDB" id="9759785at2"/>
<dbReference type="PRO" id="PR:Q2FYM1"/>
<dbReference type="Proteomes" id="UP000008816">
    <property type="component" value="Chromosome"/>
</dbReference>
<dbReference type="GO" id="GO:0005829">
    <property type="term" value="C:cytosol"/>
    <property type="evidence" value="ECO:0000318"/>
    <property type="project" value="GO_Central"/>
</dbReference>
<dbReference type="GO" id="GO:0045252">
    <property type="term" value="C:oxoglutarate dehydrogenase complex"/>
    <property type="evidence" value="ECO:0000318"/>
    <property type="project" value="GO_Central"/>
</dbReference>
<dbReference type="GO" id="GO:0004591">
    <property type="term" value="F:oxoglutarate dehydrogenase (succinyl-transferring) activity"/>
    <property type="evidence" value="ECO:0000318"/>
    <property type="project" value="GO_Central"/>
</dbReference>
<dbReference type="GO" id="GO:0030976">
    <property type="term" value="F:thiamine pyrophosphate binding"/>
    <property type="evidence" value="ECO:0007669"/>
    <property type="project" value="UniProtKB-UniRule"/>
</dbReference>
<dbReference type="GO" id="GO:0006096">
    <property type="term" value="P:glycolytic process"/>
    <property type="evidence" value="ECO:0007669"/>
    <property type="project" value="UniProtKB-UniRule"/>
</dbReference>
<dbReference type="GO" id="GO:0006099">
    <property type="term" value="P:tricarboxylic acid cycle"/>
    <property type="evidence" value="ECO:0000318"/>
    <property type="project" value="GO_Central"/>
</dbReference>
<dbReference type="CDD" id="cd02016">
    <property type="entry name" value="TPP_E1_OGDC_like"/>
    <property type="match status" value="1"/>
</dbReference>
<dbReference type="FunFam" id="3.40.50.11610:FF:000002">
    <property type="entry name" value="2-oxoglutarate dehydrogenase E1 component"/>
    <property type="match status" value="1"/>
</dbReference>
<dbReference type="FunFam" id="3.40.50.970:FF:000036">
    <property type="entry name" value="2-oxoglutarate dehydrogenase E1 component"/>
    <property type="match status" value="1"/>
</dbReference>
<dbReference type="Gene3D" id="3.40.50.12470">
    <property type="match status" value="1"/>
</dbReference>
<dbReference type="Gene3D" id="3.40.50.970">
    <property type="match status" value="1"/>
</dbReference>
<dbReference type="Gene3D" id="3.40.50.11610">
    <property type="entry name" value="Multifunctional 2-oxoglutarate metabolism enzyme, C-terminal domain"/>
    <property type="match status" value="1"/>
</dbReference>
<dbReference type="Gene3D" id="1.10.287.1150">
    <property type="entry name" value="TPP helical domain"/>
    <property type="match status" value="1"/>
</dbReference>
<dbReference type="HAMAP" id="MF_01169">
    <property type="entry name" value="SucA_OdhA"/>
    <property type="match status" value="1"/>
</dbReference>
<dbReference type="InterPro" id="IPR011603">
    <property type="entry name" value="2oxoglutarate_DH_E1"/>
</dbReference>
<dbReference type="InterPro" id="IPR023784">
    <property type="entry name" value="2oxoglutarate_DH_E1_bac"/>
</dbReference>
<dbReference type="InterPro" id="IPR001017">
    <property type="entry name" value="DH_E1"/>
</dbReference>
<dbReference type="InterPro" id="IPR042179">
    <property type="entry name" value="KGD_C_sf"/>
</dbReference>
<dbReference type="InterPro" id="IPR031717">
    <property type="entry name" value="ODO-1/KGD_C"/>
</dbReference>
<dbReference type="InterPro" id="IPR029061">
    <property type="entry name" value="THDP-binding"/>
</dbReference>
<dbReference type="InterPro" id="IPR005475">
    <property type="entry name" value="Transketolase-like_Pyr-bd"/>
</dbReference>
<dbReference type="NCBIfam" id="TIGR00239">
    <property type="entry name" value="2oxo_dh_E1"/>
    <property type="match status" value="1"/>
</dbReference>
<dbReference type="NCBIfam" id="NF006914">
    <property type="entry name" value="PRK09404.1"/>
    <property type="match status" value="1"/>
</dbReference>
<dbReference type="NCBIfam" id="NF008907">
    <property type="entry name" value="PRK12270.1"/>
    <property type="match status" value="1"/>
</dbReference>
<dbReference type="PANTHER" id="PTHR23152:SF4">
    <property type="entry name" value="2-OXOADIPATE DEHYDROGENASE COMPLEX COMPONENT E1"/>
    <property type="match status" value="1"/>
</dbReference>
<dbReference type="PANTHER" id="PTHR23152">
    <property type="entry name" value="2-OXOGLUTARATE DEHYDROGENASE"/>
    <property type="match status" value="1"/>
</dbReference>
<dbReference type="Pfam" id="PF00676">
    <property type="entry name" value="E1_dh"/>
    <property type="match status" value="1"/>
</dbReference>
<dbReference type="Pfam" id="PF16870">
    <property type="entry name" value="OxoGdeHyase_C"/>
    <property type="match status" value="1"/>
</dbReference>
<dbReference type="Pfam" id="PF02779">
    <property type="entry name" value="Transket_pyr"/>
    <property type="match status" value="1"/>
</dbReference>
<dbReference type="PIRSF" id="PIRSF000157">
    <property type="entry name" value="Oxoglu_dh_E1"/>
    <property type="match status" value="1"/>
</dbReference>
<dbReference type="SMART" id="SM00861">
    <property type="entry name" value="Transket_pyr"/>
    <property type="match status" value="1"/>
</dbReference>
<dbReference type="SUPFAM" id="SSF52518">
    <property type="entry name" value="Thiamin diphosphate-binding fold (THDP-binding)"/>
    <property type="match status" value="2"/>
</dbReference>
<accession>Q2FYM1</accession>
<gene>
    <name evidence="1" type="primary">odhA</name>
    <name type="ordered locus">SAOUHSC_01418</name>
</gene>
<organism>
    <name type="scientific">Staphylococcus aureus (strain NCTC 8325 / PS 47)</name>
    <dbReference type="NCBI Taxonomy" id="93061"/>
    <lineage>
        <taxon>Bacteria</taxon>
        <taxon>Bacillati</taxon>
        <taxon>Bacillota</taxon>
        <taxon>Bacilli</taxon>
        <taxon>Bacillales</taxon>
        <taxon>Staphylococcaceae</taxon>
        <taxon>Staphylococcus</taxon>
    </lineage>
</organism>
<evidence type="ECO:0000255" key="1">
    <source>
        <dbReference type="HAMAP-Rule" id="MF_01169"/>
    </source>
</evidence>
<keyword id="KW-0324">Glycolysis</keyword>
<keyword id="KW-0560">Oxidoreductase</keyword>
<keyword id="KW-1185">Reference proteome</keyword>
<keyword id="KW-0786">Thiamine pyrophosphate</keyword>
<sequence length="932" mass="105343">MTNERKEVSEAPVNFGANLGLMLDLYDDFLQDPSSVPEDLQVLFSTIKNDDSIVPALKSTSSQNSDGTIKRVMRLIDNIRQYGHLKADIYPVNPPKRKHVPKLEIEDFDLDQQTLEGISAGIVSDHFADIYDNAYEAILRMEKRYKGPIAFEYTHINNNTERGWLKRRIETPYKVTLNNNEKRALFKQLAYVEGFEKYLHKNFVGAKRFSIEGVDALVPMLQRTITIAAKEGIKNIQIGMAHRGRLNVLTHVLEKPYEMMISEFMHTDPMKFLPEDGSLQLTAGWTGDVKYHLGGIKTTDSYGTMQRIALANNPSHLEIVAPVVEGRTRAAQDDTQRAGAPTTDHHKAMPIIIHGDAAYPGQGINFETMNLGNLKGYSTGGSLHIITNNRIGFTTEPIDARSTTYSTDVAKGYDVPIFHVNADDVEATIEAIDIAMEFRKEFHKDVVIDLVGYRRFGHNEMDEPSITNPVPYQNIRKHDSVEYVFGKKLVNEGVISEDEMHSFIEQVQKELRQAHDKINKADKMDNPDMEKPADLALPLQADEQSFTFDHLKEINDALLTYPDGFNILKKLNKVLEKRHEPFNKEDGLVDWAQAEQLAFATILQDGTPIRLTGQDSERGTFSHRHAVLHDEQTGETYTPLHHVPDQKATFDIHNSPLSEAAVVGFEYGYNVENKKSFNIWEAQYGDFANMSQMIFDNFLFSSRSKWGERSGLTLFLPHAYEGQGPEHSSARLERFLQLAAENNCTVVNLSSSSNYFHLLRAQAASLDSEQMRPLVVMSPKSLLRNKTVAKPIDEFTSGGFEPILTESYQADKVTKVILATGKMFIDLKEALAKNPDESVLLVAIERLYPFPEEEIEALLAQLPNLEEVSWVQEEPKNQGAWLYVYPYVKVLVADKYDLSYHGRIQRAAPAEGDGEIHKLVQNKIIENALKNN</sequence>
<reference key="1">
    <citation type="book" date="2006" name="Gram positive pathogens, 2nd edition">
        <title>The Staphylococcus aureus NCTC 8325 genome.</title>
        <editorList>
            <person name="Fischetti V."/>
            <person name="Novick R."/>
            <person name="Ferretti J."/>
            <person name="Portnoy D."/>
            <person name="Rood J."/>
        </editorList>
        <authorList>
            <person name="Gillaspy A.F."/>
            <person name="Worrell V."/>
            <person name="Orvis J."/>
            <person name="Roe B.A."/>
            <person name="Dyer D.W."/>
            <person name="Iandolo J.J."/>
        </authorList>
    </citation>
    <scope>NUCLEOTIDE SEQUENCE [LARGE SCALE GENOMIC DNA]</scope>
    <source>
        <strain>NCTC 8325 / PS 47</strain>
    </source>
</reference>